<name>Y1953_STAHJ</name>
<evidence type="ECO:0000255" key="1">
    <source>
        <dbReference type="HAMAP-Rule" id="MF_01861"/>
    </source>
</evidence>
<organism>
    <name type="scientific">Staphylococcus haemolyticus (strain JCSC1435)</name>
    <dbReference type="NCBI Taxonomy" id="279808"/>
    <lineage>
        <taxon>Bacteria</taxon>
        <taxon>Bacillati</taxon>
        <taxon>Bacillota</taxon>
        <taxon>Bacilli</taxon>
        <taxon>Bacillales</taxon>
        <taxon>Staphylococcaceae</taxon>
        <taxon>Staphylococcus</taxon>
    </lineage>
</organism>
<comment type="similarity">
    <text evidence="1">Belongs to the UPF0738 family.</text>
</comment>
<proteinExistence type="inferred from homology"/>
<reference key="1">
    <citation type="journal article" date="2005" name="J. Bacteriol.">
        <title>Whole-genome sequencing of Staphylococcus haemolyticus uncovers the extreme plasticity of its genome and the evolution of human-colonizing staphylococcal species.</title>
        <authorList>
            <person name="Takeuchi F."/>
            <person name="Watanabe S."/>
            <person name="Baba T."/>
            <person name="Yuzawa H."/>
            <person name="Ito T."/>
            <person name="Morimoto Y."/>
            <person name="Kuroda M."/>
            <person name="Cui L."/>
            <person name="Takahashi M."/>
            <person name="Ankai A."/>
            <person name="Baba S."/>
            <person name="Fukui S."/>
            <person name="Lee J.C."/>
            <person name="Hiramatsu K."/>
        </authorList>
    </citation>
    <scope>NUCLEOTIDE SEQUENCE [LARGE SCALE GENOMIC DNA]</scope>
    <source>
        <strain>JCSC1435</strain>
    </source>
</reference>
<accession>Q4L513</accession>
<protein>
    <recommendedName>
        <fullName evidence="1">UPF0738 protein SH1953</fullName>
    </recommendedName>
</protein>
<sequence length="115" mass="13437">MRIYVNEIKIKDDGIYCYSEDPTDGLVEVGQMLVDSDNYGFAYLLDDGQSYDYLIFVQETWSMLHENRGKKLIVNDDLVLEHFQEELDYILENVEGNNNYGKEFVSAVEETFDLK</sequence>
<gene>
    <name type="ordered locus">SH1953</name>
</gene>
<feature type="chain" id="PRO_0000369673" description="UPF0738 protein SH1953">
    <location>
        <begin position="1"/>
        <end position="115"/>
    </location>
</feature>
<dbReference type="EMBL" id="AP006716">
    <property type="protein sequence ID" value="BAE05262.1"/>
    <property type="molecule type" value="Genomic_DNA"/>
</dbReference>
<dbReference type="RefSeq" id="WP_011276223.1">
    <property type="nucleotide sequence ID" value="NC_007168.1"/>
</dbReference>
<dbReference type="KEGG" id="sha:SH1953"/>
<dbReference type="eggNOG" id="ENOG5032YMN">
    <property type="taxonomic scope" value="Bacteria"/>
</dbReference>
<dbReference type="HOGENOM" id="CLU_142282_0_0_9"/>
<dbReference type="OrthoDB" id="2966478at2"/>
<dbReference type="Proteomes" id="UP000000543">
    <property type="component" value="Chromosome"/>
</dbReference>
<dbReference type="HAMAP" id="MF_01861">
    <property type="entry name" value="UPF0738"/>
    <property type="match status" value="1"/>
</dbReference>
<dbReference type="InterPro" id="IPR020908">
    <property type="entry name" value="UPF0738"/>
</dbReference>
<dbReference type="Pfam" id="PF19785">
    <property type="entry name" value="UPF0738"/>
    <property type="match status" value="1"/>
</dbReference>